<protein>
    <recommendedName>
        <fullName evidence="1">UPF0253 protein YaeP</fullName>
    </recommendedName>
</protein>
<name>YAEP_SHIDS</name>
<evidence type="ECO:0000255" key="1">
    <source>
        <dbReference type="HAMAP-Rule" id="MF_01064"/>
    </source>
</evidence>
<evidence type="ECO:0000305" key="2"/>
<organism>
    <name type="scientific">Shigella dysenteriae serotype 1 (strain Sd197)</name>
    <dbReference type="NCBI Taxonomy" id="300267"/>
    <lineage>
        <taxon>Bacteria</taxon>
        <taxon>Pseudomonadati</taxon>
        <taxon>Pseudomonadota</taxon>
        <taxon>Gammaproteobacteria</taxon>
        <taxon>Enterobacterales</taxon>
        <taxon>Enterobacteriaceae</taxon>
        <taxon>Shigella</taxon>
    </lineage>
</organism>
<dbReference type="EMBL" id="CP000034">
    <property type="protein sequence ID" value="ABB60439.1"/>
    <property type="status" value="ALT_INIT"/>
    <property type="molecule type" value="Genomic_DNA"/>
</dbReference>
<dbReference type="RefSeq" id="WP_000417058.1">
    <property type="nucleotide sequence ID" value="NC_007606.1"/>
</dbReference>
<dbReference type="RefSeq" id="YP_401928.1">
    <property type="nucleotide sequence ID" value="NC_007606.1"/>
</dbReference>
<dbReference type="SMR" id="Q32JR8"/>
<dbReference type="STRING" id="300267.SDY_0208"/>
<dbReference type="EnsemblBacteria" id="ABB60439">
    <property type="protein sequence ID" value="ABB60439"/>
    <property type="gene ID" value="SDY_0208"/>
</dbReference>
<dbReference type="KEGG" id="sdy:SDY_0208"/>
<dbReference type="PATRIC" id="fig|300267.13.peg.242"/>
<dbReference type="HOGENOM" id="CLU_190008_0_0_6"/>
<dbReference type="Proteomes" id="UP000002716">
    <property type="component" value="Chromosome"/>
</dbReference>
<dbReference type="HAMAP" id="MF_01064">
    <property type="entry name" value="UPF0253"/>
    <property type="match status" value="1"/>
</dbReference>
<dbReference type="InterPro" id="IPR009624">
    <property type="entry name" value="UPF0253"/>
</dbReference>
<dbReference type="NCBIfam" id="NF003436">
    <property type="entry name" value="PRK04964.1"/>
    <property type="match status" value="1"/>
</dbReference>
<dbReference type="Pfam" id="PF06786">
    <property type="entry name" value="UPF0253"/>
    <property type="match status" value="1"/>
</dbReference>
<proteinExistence type="inferred from homology"/>
<comment type="similarity">
    <text evidence="1">Belongs to the UPF0253 family.</text>
</comment>
<comment type="sequence caution" evidence="2">
    <conflict type="erroneous initiation">
        <sequence resource="EMBL-CDS" id="ABB60439"/>
    </conflict>
</comment>
<keyword id="KW-1185">Reference proteome</keyword>
<accession>Q32JR8</accession>
<gene>
    <name evidence="1" type="primary">yaeP</name>
    <name type="ordered locus">SDY_0208</name>
</gene>
<feature type="chain" id="PRO_0000277524" description="UPF0253 protein YaeP">
    <location>
        <begin position="1"/>
        <end position="66"/>
    </location>
</feature>
<sequence length="66" mass="7214">MEKYCELIRKRYAEIASGDLGYVPDALGCVLKVLNEMAADDALSEAVREKAAYAAANLLVSDYVNE</sequence>
<reference key="1">
    <citation type="journal article" date="2005" name="Nucleic Acids Res.">
        <title>Genome dynamics and diversity of Shigella species, the etiologic agents of bacillary dysentery.</title>
        <authorList>
            <person name="Yang F."/>
            <person name="Yang J."/>
            <person name="Zhang X."/>
            <person name="Chen L."/>
            <person name="Jiang Y."/>
            <person name="Yan Y."/>
            <person name="Tang X."/>
            <person name="Wang J."/>
            <person name="Xiong Z."/>
            <person name="Dong J."/>
            <person name="Xue Y."/>
            <person name="Zhu Y."/>
            <person name="Xu X."/>
            <person name="Sun L."/>
            <person name="Chen S."/>
            <person name="Nie H."/>
            <person name="Peng J."/>
            <person name="Xu J."/>
            <person name="Wang Y."/>
            <person name="Yuan Z."/>
            <person name="Wen Y."/>
            <person name="Yao Z."/>
            <person name="Shen Y."/>
            <person name="Qiang B."/>
            <person name="Hou Y."/>
            <person name="Yu J."/>
            <person name="Jin Q."/>
        </authorList>
    </citation>
    <scope>NUCLEOTIDE SEQUENCE [LARGE SCALE GENOMIC DNA]</scope>
    <source>
        <strain>Sd197</strain>
    </source>
</reference>